<dbReference type="EMBL" id="CU928145">
    <property type="protein sequence ID" value="CAV00024.1"/>
    <property type="molecule type" value="Genomic_DNA"/>
</dbReference>
<dbReference type="RefSeq" id="WP_000644741.1">
    <property type="nucleotide sequence ID" value="NZ_CP028304.1"/>
</dbReference>
<dbReference type="SMR" id="B7L4J8"/>
<dbReference type="GeneID" id="93778675"/>
<dbReference type="KEGG" id="eck:EC55989_3728"/>
<dbReference type="HOGENOM" id="CLU_158491_1_2_6"/>
<dbReference type="Proteomes" id="UP000000746">
    <property type="component" value="Chromosome"/>
</dbReference>
<dbReference type="GO" id="GO:0022625">
    <property type="term" value="C:cytosolic large ribosomal subunit"/>
    <property type="evidence" value="ECO:0007669"/>
    <property type="project" value="TreeGrafter"/>
</dbReference>
<dbReference type="GO" id="GO:0003735">
    <property type="term" value="F:structural constituent of ribosome"/>
    <property type="evidence" value="ECO:0007669"/>
    <property type="project" value="InterPro"/>
</dbReference>
<dbReference type="GO" id="GO:0006412">
    <property type="term" value="P:translation"/>
    <property type="evidence" value="ECO:0007669"/>
    <property type="project" value="UniProtKB-UniRule"/>
</dbReference>
<dbReference type="CDD" id="cd00427">
    <property type="entry name" value="Ribosomal_L29_HIP"/>
    <property type="match status" value="1"/>
</dbReference>
<dbReference type="Gene3D" id="6.10.140.1970">
    <property type="match status" value="1"/>
</dbReference>
<dbReference type="HAMAP" id="MF_00374">
    <property type="entry name" value="Ribosomal_uL29"/>
    <property type="match status" value="1"/>
</dbReference>
<dbReference type="InterPro" id="IPR050063">
    <property type="entry name" value="Ribosomal_protein_uL29"/>
</dbReference>
<dbReference type="InterPro" id="IPR001854">
    <property type="entry name" value="Ribosomal_uL29"/>
</dbReference>
<dbReference type="InterPro" id="IPR018254">
    <property type="entry name" value="Ribosomal_uL29_CS"/>
</dbReference>
<dbReference type="InterPro" id="IPR036049">
    <property type="entry name" value="Ribosomal_uL29_sf"/>
</dbReference>
<dbReference type="NCBIfam" id="TIGR00012">
    <property type="entry name" value="L29"/>
    <property type="match status" value="1"/>
</dbReference>
<dbReference type="PANTHER" id="PTHR10916">
    <property type="entry name" value="60S RIBOSOMAL PROTEIN L35/50S RIBOSOMAL PROTEIN L29"/>
    <property type="match status" value="1"/>
</dbReference>
<dbReference type="PANTHER" id="PTHR10916:SF0">
    <property type="entry name" value="LARGE RIBOSOMAL SUBUNIT PROTEIN UL29C"/>
    <property type="match status" value="1"/>
</dbReference>
<dbReference type="Pfam" id="PF00831">
    <property type="entry name" value="Ribosomal_L29"/>
    <property type="match status" value="1"/>
</dbReference>
<dbReference type="SUPFAM" id="SSF46561">
    <property type="entry name" value="Ribosomal protein L29 (L29p)"/>
    <property type="match status" value="1"/>
</dbReference>
<dbReference type="PROSITE" id="PS00579">
    <property type="entry name" value="RIBOSOMAL_L29"/>
    <property type="match status" value="1"/>
</dbReference>
<name>RL29_ECO55</name>
<accession>B7L4J8</accession>
<feature type="chain" id="PRO_1000194014" description="Large ribosomal subunit protein uL29">
    <location>
        <begin position="1"/>
        <end position="63"/>
    </location>
</feature>
<proteinExistence type="inferred from homology"/>
<keyword id="KW-1185">Reference proteome</keyword>
<keyword id="KW-0687">Ribonucleoprotein</keyword>
<keyword id="KW-0689">Ribosomal protein</keyword>
<organism>
    <name type="scientific">Escherichia coli (strain 55989 / EAEC)</name>
    <dbReference type="NCBI Taxonomy" id="585055"/>
    <lineage>
        <taxon>Bacteria</taxon>
        <taxon>Pseudomonadati</taxon>
        <taxon>Pseudomonadota</taxon>
        <taxon>Gammaproteobacteria</taxon>
        <taxon>Enterobacterales</taxon>
        <taxon>Enterobacteriaceae</taxon>
        <taxon>Escherichia</taxon>
    </lineage>
</organism>
<protein>
    <recommendedName>
        <fullName evidence="1">Large ribosomal subunit protein uL29</fullName>
    </recommendedName>
    <alternativeName>
        <fullName evidence="2">50S ribosomal protein L29</fullName>
    </alternativeName>
</protein>
<sequence length="63" mass="7273">MKAKELREKSVEELNTELLNLLREQFNLRMQAASGQLQQSHLLKQVRRDVARVKTLLNEKAGA</sequence>
<gene>
    <name evidence="1" type="primary">rpmC</name>
    <name type="ordered locus">EC55989_3728</name>
</gene>
<comment type="similarity">
    <text evidence="1">Belongs to the universal ribosomal protein uL29 family.</text>
</comment>
<reference key="1">
    <citation type="journal article" date="2009" name="PLoS Genet.">
        <title>Organised genome dynamics in the Escherichia coli species results in highly diverse adaptive paths.</title>
        <authorList>
            <person name="Touchon M."/>
            <person name="Hoede C."/>
            <person name="Tenaillon O."/>
            <person name="Barbe V."/>
            <person name="Baeriswyl S."/>
            <person name="Bidet P."/>
            <person name="Bingen E."/>
            <person name="Bonacorsi S."/>
            <person name="Bouchier C."/>
            <person name="Bouvet O."/>
            <person name="Calteau A."/>
            <person name="Chiapello H."/>
            <person name="Clermont O."/>
            <person name="Cruveiller S."/>
            <person name="Danchin A."/>
            <person name="Diard M."/>
            <person name="Dossat C."/>
            <person name="Karoui M.E."/>
            <person name="Frapy E."/>
            <person name="Garry L."/>
            <person name="Ghigo J.M."/>
            <person name="Gilles A.M."/>
            <person name="Johnson J."/>
            <person name="Le Bouguenec C."/>
            <person name="Lescat M."/>
            <person name="Mangenot S."/>
            <person name="Martinez-Jehanne V."/>
            <person name="Matic I."/>
            <person name="Nassif X."/>
            <person name="Oztas S."/>
            <person name="Petit M.A."/>
            <person name="Pichon C."/>
            <person name="Rouy Z."/>
            <person name="Ruf C.S."/>
            <person name="Schneider D."/>
            <person name="Tourret J."/>
            <person name="Vacherie B."/>
            <person name="Vallenet D."/>
            <person name="Medigue C."/>
            <person name="Rocha E.P.C."/>
            <person name="Denamur E."/>
        </authorList>
    </citation>
    <scope>NUCLEOTIDE SEQUENCE [LARGE SCALE GENOMIC DNA]</scope>
    <source>
        <strain>55989 / EAEC</strain>
    </source>
</reference>
<evidence type="ECO:0000255" key="1">
    <source>
        <dbReference type="HAMAP-Rule" id="MF_00374"/>
    </source>
</evidence>
<evidence type="ECO:0000305" key="2"/>